<proteinExistence type="inferred from homology"/>
<organism>
    <name type="scientific">Ephedra tweediana</name>
    <name type="common">Vining horsetail</name>
    <dbReference type="NCBI Taxonomy" id="3390"/>
    <lineage>
        <taxon>Eukaryota</taxon>
        <taxon>Viridiplantae</taxon>
        <taxon>Streptophyta</taxon>
        <taxon>Embryophyta</taxon>
        <taxon>Tracheophyta</taxon>
        <taxon>Spermatophyta</taxon>
        <taxon>Gnetopsida</taxon>
        <taxon>Gnetidae</taxon>
        <taxon>Ephedrales</taxon>
        <taxon>Ephedraceae</taxon>
        <taxon>Ephedra</taxon>
    </lineage>
</organism>
<evidence type="ECO:0000255" key="1">
    <source>
        <dbReference type="HAMAP-Rule" id="MF_00458"/>
    </source>
</evidence>
<sequence length="720" mass="80254">IKIMVERDPIKTSFEKWANPGHFSRTLAKGDPETTTWIWNLHADAHDFDSHTEDLEEISRKIFSAHFGQLAIIFIWLSGMYFHGARFSNYEAWLADPTHIKPSAQVVWPIVGQEILNGDVGGGFRGIQITSGFFPIWRASGITSELQLYCTAIGGLIFAALMLFAGWFHYHKAAPKLSWFQVESMLNHHLAGLLGLGSLSWAGHQVHVSLPINQLLDAGVDPKEIPLPHEFILNRDLLIQLYPSFSKGLTPFFTLNWSEYSEILTFRGGLNPITGGLWLTDIVHHHLAIAVIFLIAGHMYKTNWGIGHSIQEILEAHKGPFTGEGHKGLYEILTTSWHAQLALNLAILGSLTIVVAHHMYSMPPYPYLAIDYGTQLSLFTHHMWIGGFVIIGAAAHAAIFLVRDYDSTTSYNNLFDRVLRHRDAIISHLNWTCIFLGFHSFGLYIHNDTMSALGRPQDMFSDTAIQLQPIFAQWLQNTHVTAPRFTAPAATASTSFTWGGNDLVTVGTKVALLPIPLGTADFLVHHIHAFTIHVTVLILLKGVLFARSSRLIPDKANLGFRFPCDGPGRGGTCQVSAWDHVFLGLFWMYNAISVVIFHFSWKMQSDVWGNISTQGVVTHITGGNFAQSSVTINGWLRDFLWAQASQVIQSYGSALSAYGLFFLGAHFVWAFSLMFLFSGRGYWQELIESIVWAHNKLKVAPAIQPRALSIVQGRAVGVAH</sequence>
<reference key="1">
    <citation type="journal article" date="2000" name="Mol. Biol. Evol.">
        <title>Error, bias, and long-branch attraction in data for two chloroplast photosystem genes in seed plants.</title>
        <authorList>
            <person name="Sanderson M.J."/>
            <person name="Wojciechowski M.F."/>
            <person name="Hu J.-M."/>
            <person name="Sher Khan T."/>
            <person name="Brady S.G."/>
        </authorList>
    </citation>
    <scope>NUCLEOTIDE SEQUENCE [GENOMIC DNA]</scope>
</reference>
<feature type="chain" id="PRO_0000088547" description="Photosystem I P700 chlorophyll a apoprotein A1">
    <location>
        <begin position="1" status="less than"/>
        <end position="720" status="greater than"/>
    </location>
</feature>
<feature type="transmembrane region" description="Helical; Name=I" evidence="1">
    <location>
        <begin position="62"/>
        <end position="85"/>
    </location>
</feature>
<feature type="transmembrane region" description="Helical; Name=II" evidence="1">
    <location>
        <begin position="148"/>
        <end position="171"/>
    </location>
</feature>
<feature type="transmembrane region" description="Helical; Name=III" evidence="1">
    <location>
        <begin position="186"/>
        <end position="210"/>
    </location>
</feature>
<feature type="transmembrane region" description="Helical; Name=IV" evidence="1">
    <location>
        <begin position="282"/>
        <end position="300"/>
    </location>
</feature>
<feature type="transmembrane region" description="Helical; Name=V" evidence="1">
    <location>
        <begin position="337"/>
        <end position="360"/>
    </location>
</feature>
<feature type="transmembrane region" description="Helical; Name=VI" evidence="1">
    <location>
        <begin position="376"/>
        <end position="402"/>
    </location>
</feature>
<feature type="transmembrane region" description="Helical; Name=VII" evidence="1">
    <location>
        <begin position="424"/>
        <end position="446"/>
    </location>
</feature>
<feature type="transmembrane region" description="Helical; Name=VIII" evidence="1">
    <location>
        <begin position="522"/>
        <end position="540"/>
    </location>
</feature>
<feature type="transmembrane region" description="Helical; Name=IX" evidence="1">
    <location>
        <begin position="580"/>
        <end position="601"/>
    </location>
</feature>
<feature type="transmembrane region" description="Helical; Name=X" evidence="1">
    <location>
        <begin position="655"/>
        <end position="677"/>
    </location>
</feature>
<feature type="transmembrane region" description="Helical; Name=XI" evidence="1">
    <location>
        <begin position="715"/>
        <end position="720" status="greater than"/>
    </location>
</feature>
<feature type="binding site" evidence="1">
    <location>
        <position position="564"/>
    </location>
    <ligand>
        <name>[4Fe-4S] cluster</name>
        <dbReference type="ChEBI" id="CHEBI:49883"/>
        <note>ligand shared between dimeric partners</note>
    </ligand>
</feature>
<feature type="binding site" evidence="1">
    <location>
        <position position="573"/>
    </location>
    <ligand>
        <name>[4Fe-4S] cluster</name>
        <dbReference type="ChEBI" id="CHEBI:49883"/>
        <note>ligand shared between dimeric partners</note>
    </ligand>
</feature>
<feature type="binding site" description="axial binding residue" evidence="1">
    <location>
        <position position="666"/>
    </location>
    <ligand>
        <name>chlorophyll a'</name>
        <dbReference type="ChEBI" id="CHEBI:189419"/>
        <label>A1</label>
    </ligand>
    <ligandPart>
        <name>Mg</name>
        <dbReference type="ChEBI" id="CHEBI:25107"/>
    </ligandPart>
</feature>
<feature type="binding site" description="axial binding residue" evidence="1">
    <location>
        <position position="674"/>
    </location>
    <ligand>
        <name>chlorophyll a</name>
        <dbReference type="ChEBI" id="CHEBI:58416"/>
        <label>A3</label>
    </ligand>
    <ligandPart>
        <name>Mg</name>
        <dbReference type="ChEBI" id="CHEBI:25107"/>
    </ligandPart>
</feature>
<feature type="binding site" evidence="1">
    <location>
        <position position="682"/>
    </location>
    <ligand>
        <name>chlorophyll a</name>
        <dbReference type="ChEBI" id="CHEBI:58416"/>
        <label>A3</label>
    </ligand>
</feature>
<feature type="binding site" evidence="1">
    <location>
        <position position="683"/>
    </location>
    <ligand>
        <name>phylloquinone</name>
        <dbReference type="ChEBI" id="CHEBI:18067"/>
        <label>A</label>
    </ligand>
</feature>
<feature type="non-terminal residue">
    <location>
        <position position="1"/>
    </location>
</feature>
<feature type="non-terminal residue">
    <location>
        <position position="720"/>
    </location>
</feature>
<name>PSAA_EPHTW</name>
<gene>
    <name evidence="1" type="primary">psaA</name>
</gene>
<dbReference type="EC" id="1.97.1.12" evidence="1"/>
<dbReference type="EMBL" id="AF180017">
    <property type="protein sequence ID" value="AAF29818.1"/>
    <property type="molecule type" value="Genomic_DNA"/>
</dbReference>
<dbReference type="SMR" id="Q9MUJ8"/>
<dbReference type="GO" id="GO:0009535">
    <property type="term" value="C:chloroplast thylakoid membrane"/>
    <property type="evidence" value="ECO:0007669"/>
    <property type="project" value="UniProtKB-SubCell"/>
</dbReference>
<dbReference type="GO" id="GO:0009522">
    <property type="term" value="C:photosystem I"/>
    <property type="evidence" value="ECO:0007669"/>
    <property type="project" value="UniProtKB-KW"/>
</dbReference>
<dbReference type="GO" id="GO:0051539">
    <property type="term" value="F:4 iron, 4 sulfur cluster binding"/>
    <property type="evidence" value="ECO:0007669"/>
    <property type="project" value="UniProtKB-KW"/>
</dbReference>
<dbReference type="GO" id="GO:0016168">
    <property type="term" value="F:chlorophyll binding"/>
    <property type="evidence" value="ECO:0007669"/>
    <property type="project" value="UniProtKB-KW"/>
</dbReference>
<dbReference type="GO" id="GO:0046872">
    <property type="term" value="F:metal ion binding"/>
    <property type="evidence" value="ECO:0007669"/>
    <property type="project" value="UniProtKB-KW"/>
</dbReference>
<dbReference type="GO" id="GO:0016491">
    <property type="term" value="F:oxidoreductase activity"/>
    <property type="evidence" value="ECO:0007669"/>
    <property type="project" value="UniProtKB-KW"/>
</dbReference>
<dbReference type="GO" id="GO:0015979">
    <property type="term" value="P:photosynthesis"/>
    <property type="evidence" value="ECO:0007669"/>
    <property type="project" value="UniProtKB-KW"/>
</dbReference>
<dbReference type="FunFam" id="1.20.1130.10:FF:000001">
    <property type="entry name" value="Photosystem I P700 chlorophyll a apoprotein A2"/>
    <property type="match status" value="1"/>
</dbReference>
<dbReference type="Gene3D" id="1.20.1130.10">
    <property type="entry name" value="Photosystem I PsaA/PsaB"/>
    <property type="match status" value="1"/>
</dbReference>
<dbReference type="HAMAP" id="MF_00458">
    <property type="entry name" value="PSI_PsaA"/>
    <property type="match status" value="1"/>
</dbReference>
<dbReference type="InterPro" id="IPR006243">
    <property type="entry name" value="PSI_PsaA"/>
</dbReference>
<dbReference type="InterPro" id="IPR001280">
    <property type="entry name" value="PSI_PsaA/B"/>
</dbReference>
<dbReference type="InterPro" id="IPR020586">
    <property type="entry name" value="PSI_PsaA/B_CS"/>
</dbReference>
<dbReference type="InterPro" id="IPR036408">
    <property type="entry name" value="PSI_PsaA/B_sf"/>
</dbReference>
<dbReference type="NCBIfam" id="TIGR01335">
    <property type="entry name" value="psaA"/>
    <property type="match status" value="1"/>
</dbReference>
<dbReference type="PANTHER" id="PTHR30128">
    <property type="entry name" value="OUTER MEMBRANE PROTEIN, OMPA-RELATED"/>
    <property type="match status" value="1"/>
</dbReference>
<dbReference type="PANTHER" id="PTHR30128:SF19">
    <property type="entry name" value="PHOTOSYSTEM I P700 CHLOROPHYLL A APOPROTEIN A1-RELATED"/>
    <property type="match status" value="1"/>
</dbReference>
<dbReference type="Pfam" id="PF00223">
    <property type="entry name" value="PsaA_PsaB"/>
    <property type="match status" value="1"/>
</dbReference>
<dbReference type="PIRSF" id="PIRSF002905">
    <property type="entry name" value="PSI_A"/>
    <property type="match status" value="1"/>
</dbReference>
<dbReference type="PRINTS" id="PR00257">
    <property type="entry name" value="PHOTSYSPSAAB"/>
</dbReference>
<dbReference type="SUPFAM" id="SSF81558">
    <property type="entry name" value="Photosystem I subunits PsaA/PsaB"/>
    <property type="match status" value="1"/>
</dbReference>
<dbReference type="PROSITE" id="PS00419">
    <property type="entry name" value="PHOTOSYSTEM_I_PSAAB"/>
    <property type="match status" value="1"/>
</dbReference>
<comment type="function">
    <text>PsaA and PsaB bind P700, the primary electron donor of photosystem I (PSI), as well as the electron acceptors A0, A1 and FX. PSI is a plastocyanin-ferredoxin oxidoreductase, converting photonic excitation into a charge separation, which transfers an electron from the donor P700 chlorophyll pair to the spectroscopically characterized acceptors A0, A1, FX, FA and FB in turn. Oxidized P700 is reduced on the lumenal side of the thylakoid membrane by plastocyanin.</text>
</comment>
<comment type="catalytic activity">
    <reaction evidence="1">
        <text>reduced [plastocyanin] + hnu + oxidized [2Fe-2S]-[ferredoxin] = oxidized [plastocyanin] + reduced [2Fe-2S]-[ferredoxin]</text>
        <dbReference type="Rhea" id="RHEA:30407"/>
        <dbReference type="Rhea" id="RHEA-COMP:10000"/>
        <dbReference type="Rhea" id="RHEA-COMP:10001"/>
        <dbReference type="Rhea" id="RHEA-COMP:10039"/>
        <dbReference type="Rhea" id="RHEA-COMP:10040"/>
        <dbReference type="ChEBI" id="CHEBI:29036"/>
        <dbReference type="ChEBI" id="CHEBI:30212"/>
        <dbReference type="ChEBI" id="CHEBI:33737"/>
        <dbReference type="ChEBI" id="CHEBI:33738"/>
        <dbReference type="ChEBI" id="CHEBI:49552"/>
        <dbReference type="EC" id="1.97.1.12"/>
    </reaction>
</comment>
<comment type="cofactor">
    <text evidence="1">P700 is a chlorophyll a/chlorophyll a' dimer, A0 is one or more chlorophyll a, A1 is one or both phylloquinones and FX is a shared 4Fe-4S iron-sulfur center.</text>
</comment>
<comment type="subunit">
    <text evidence="1">The PsaA/B heterodimer binds the P700 chlorophyll special pair and subsequent electron acceptors. PSI consists of a core antenna complex that captures photons, and an electron transfer chain that converts photonic excitation into a charge separation. The eukaryotic PSI reaction center is composed of at least 11 subunits.</text>
</comment>
<comment type="subcellular location">
    <subcellularLocation>
        <location evidence="1">Plastid</location>
        <location evidence="1">Chloroplast thylakoid membrane</location>
        <topology evidence="1">Multi-pass membrane protein</topology>
    </subcellularLocation>
</comment>
<comment type="similarity">
    <text evidence="1">Belongs to the PsaA/PsaB family.</text>
</comment>
<accession>Q9MUJ8</accession>
<protein>
    <recommendedName>
        <fullName evidence="1">Photosystem I P700 chlorophyll a apoprotein A1</fullName>
        <ecNumber evidence="1">1.97.1.12</ecNumber>
    </recommendedName>
    <alternativeName>
        <fullName evidence="1">PSI-A</fullName>
    </alternativeName>
    <alternativeName>
        <fullName evidence="1">PsaA</fullName>
    </alternativeName>
</protein>
<geneLocation type="chloroplast"/>
<keyword id="KW-0004">4Fe-4S</keyword>
<keyword id="KW-0148">Chlorophyll</keyword>
<keyword id="KW-0150">Chloroplast</keyword>
<keyword id="KW-0157">Chromophore</keyword>
<keyword id="KW-0249">Electron transport</keyword>
<keyword id="KW-0408">Iron</keyword>
<keyword id="KW-0411">Iron-sulfur</keyword>
<keyword id="KW-0460">Magnesium</keyword>
<keyword id="KW-0472">Membrane</keyword>
<keyword id="KW-0479">Metal-binding</keyword>
<keyword id="KW-0560">Oxidoreductase</keyword>
<keyword id="KW-0602">Photosynthesis</keyword>
<keyword id="KW-0603">Photosystem I</keyword>
<keyword id="KW-0934">Plastid</keyword>
<keyword id="KW-0793">Thylakoid</keyword>
<keyword id="KW-0812">Transmembrane</keyword>
<keyword id="KW-1133">Transmembrane helix</keyword>
<keyword id="KW-0813">Transport</keyword>